<proteinExistence type="evidence at protein level"/>
<keyword id="KW-0520">NAD</keyword>
<keyword id="KW-0547">Nucleotide-binding</keyword>
<keyword id="KW-0560">Oxidoreductase</keyword>
<keyword id="KW-1185">Reference proteome</keyword>
<reference key="1">
    <citation type="journal article" date="2017" name="Syst. Appl. Microbiol.">
        <title>Examination into the taxonomic position of Bacillus thermotolerans Yang et al., 2013, proposal for its reclassification into a new genus and species Quasibacillus thermotolerans gen. nov., comb. nov. and reclassification of B. encimensis Dastager et al., 2015 as a later heterotypic synonym of B. badius.</title>
        <authorList>
            <person name="Verma A."/>
            <person name="Pal Y."/>
            <person name="Khatri I."/>
            <person name="Ojha A.K."/>
            <person name="Gruber-Vodicka H."/>
            <person name="Schumann P."/>
            <person name="Dastager S."/>
            <person name="Subramanian S."/>
            <person name="Mayilraj S."/>
            <person name="Krishnamurthi S."/>
        </authorList>
    </citation>
    <scope>NUCLEOTIDE SEQUENCE [LARGE SCALE GENOMIC DNA]</scope>
    <source>
        <strain>MTCC 8252</strain>
    </source>
</reference>
<reference key="2">
    <citation type="journal article" date="2024" name="Molecular Catalysis">
        <title>A novel and thermostable phenylalanine dehydrogenase for efficient synthesis of bulky aromatic amino acids and derivatives.</title>
        <authorList>
            <person name="Hu Y."/>
            <person name="Xu G."/>
            <person name="Ni Y."/>
        </authorList>
    </citation>
    <scope>FUNCTION</scope>
    <scope>CATALYTIC ACTIVITY</scope>
    <scope>ACTIVITY REGULATION</scope>
    <scope>BIOPHYSICOCHEMICAL PROPERTIES</scope>
    <scope>BIOTECHNOLOGY</scope>
</reference>
<accession>A0A0F5HSE8</accession>
<accession>A0A0F5I697</accession>
<sequence>MNVTKKTSVMEDFTLFEKMSEHEQVVFCNDPDTGLRAIIAIHDTTLGPALGGCRMYPYGSVEEALEDVLRLSKGMSYKCAAADVDFGGGKAVIIGDPQTDKSPELFRAFGQFVESLGGRFYTGTDMGTTMDDFIHAMKETNSIVGVPEAYGGGGDSSVPTAMGVLYGLKATNYMLFGKEDLANASYAIQGLGKVGYKVAEALLEEGAQLFVTDINQQSLQDIQEKAKSTSGSVTVVESTAIYSQEADIFVPCAFGGVINDETIEQLKVKAIAGSANNQLLTEEHGRQLAKKGILYAPDYIINAGGLIQVADELYGVNKERVLAKTARIYDAILETYKQADLDGITTMEAANRMCEQRIRARGKRNHFYTGSVQPKWNIRRSF</sequence>
<gene>
    <name evidence="5" type="ORF">QY95_00856</name>
</gene>
<name>DHPH_BACTR</name>
<feature type="chain" id="PRO_0000460179" description="Phenylalanine dehydrogenase">
    <location>
        <begin position="1"/>
        <end position="382"/>
    </location>
</feature>
<feature type="active site" description="Proton donor/acceptor" evidence="1">
    <location>
        <position position="90"/>
    </location>
</feature>
<feature type="binding site" evidence="1">
    <location>
        <position position="54"/>
    </location>
    <ligand>
        <name>NAD(+)</name>
        <dbReference type="ChEBI" id="CHEBI:57540"/>
    </ligand>
</feature>
<feature type="binding site" evidence="1">
    <location>
        <position position="78"/>
    </location>
    <ligand>
        <name>L-phenylalanine</name>
        <dbReference type="ChEBI" id="CHEBI:58095"/>
    </ligand>
</feature>
<feature type="binding site" evidence="1">
    <location>
        <position position="125"/>
    </location>
    <ligand>
        <name>NAD(+)</name>
        <dbReference type="ChEBI" id="CHEBI:57540"/>
    </ligand>
</feature>
<feature type="binding site" evidence="1">
    <location>
        <position position="156"/>
    </location>
    <ligand>
        <name>NAD(+)</name>
        <dbReference type="ChEBI" id="CHEBI:57540"/>
    </ligand>
</feature>
<feature type="binding site" evidence="1">
    <location>
        <position position="160"/>
    </location>
    <ligand>
        <name>NAD(+)</name>
        <dbReference type="ChEBI" id="CHEBI:57540"/>
    </ligand>
</feature>
<feature type="binding site" evidence="1">
    <location>
        <begin position="190"/>
        <end position="196"/>
    </location>
    <ligand>
        <name>NAD(+)</name>
        <dbReference type="ChEBI" id="CHEBI:57540"/>
    </ligand>
</feature>
<feature type="binding site" evidence="1">
    <location>
        <begin position="213"/>
        <end position="214"/>
    </location>
    <ligand>
        <name>NAD(+)</name>
        <dbReference type="ChEBI" id="CHEBI:57540"/>
    </ligand>
</feature>
<feature type="binding site" evidence="1">
    <location>
        <begin position="253"/>
        <end position="254"/>
    </location>
    <ligand>
        <name>NAD(+)</name>
        <dbReference type="ChEBI" id="CHEBI:57540"/>
    </ligand>
</feature>
<feature type="binding site" evidence="1">
    <location>
        <begin position="274"/>
        <end position="276"/>
    </location>
    <ligand>
        <name>NAD(+)</name>
        <dbReference type="ChEBI" id="CHEBI:57540"/>
    </ligand>
</feature>
<feature type="binding site" evidence="1">
    <location>
        <position position="276"/>
    </location>
    <ligand>
        <name>L-phenylalanine</name>
        <dbReference type="ChEBI" id="CHEBI:58095"/>
    </ligand>
</feature>
<comment type="function">
    <text evidence="2">Catalyzes the reversible NAD(+)-dependent oxidative deamination of L-phenylalanine to phenylpyruvate (Ref.2). Can also catalyze the oxidative deamination of several other amino acids, with much lower efficiency (Ref.2). Shows activity towards various bulky aromatic alpha-keto acids/esters and (S)-amine alcohols (Ref.2). Can catalyze the amination of 3-(2-chlorophenyl)-2-oxopropionic acid (CPOA) to produce 2-chloro-L-phenylalanine (2-Cl-Phe), a chemical compound used in the pharmaceutical and biotechnology industries (Ref.2). Shows a preference for amination over deamination (Ref.2).</text>
</comment>
<comment type="catalytic activity">
    <reaction evidence="2">
        <text>L-phenylalanine + NAD(+) + H2O = 3-phenylpyruvate + NH4(+) + NADH + H(+)</text>
        <dbReference type="Rhea" id="RHEA:21408"/>
        <dbReference type="ChEBI" id="CHEBI:15377"/>
        <dbReference type="ChEBI" id="CHEBI:15378"/>
        <dbReference type="ChEBI" id="CHEBI:18005"/>
        <dbReference type="ChEBI" id="CHEBI:28938"/>
        <dbReference type="ChEBI" id="CHEBI:57540"/>
        <dbReference type="ChEBI" id="CHEBI:57945"/>
        <dbReference type="ChEBI" id="CHEBI:58095"/>
        <dbReference type="EC" id="1.4.1.20"/>
    </reaction>
</comment>
<comment type="activity regulation">
    <text evidence="2">Activity is not affected by the metal chelating agent EDTA (Ref.2). Addition of 1 mM Mg(2+) results in 15% increase in activity, while the enzyme is strongly inhibited by 1 mM Fe(3+), Fe(2+), Cu(2+), Zn(2+) and Ag(+) (Ref.2).</text>
</comment>
<comment type="biophysicochemical properties">
    <kinetics>
        <KM evidence="2">0.19 mM for 2-oxo-4-phenylbutyric acid</KM>
        <KM evidence="2">0.51 mM for CPOA</KM>
        <KM evidence="2">5.16 mM for benzoylformic acid</KM>
        <KM evidence="2">0.088 mM for NADH</KM>
        <text evidence="2">kcat is 0.53 sec(-1) with 2-oxo-4-phenylbutyric acid as substrate. kcat is 58.91 sec(-1) with CPOA as substrate. kcat is 0.048 sec(-1) with benzoylformic acid as substrate. kcat is 146.30 sec(-1) with NADH as substrate.</text>
    </kinetics>
    <phDependence>
        <text evidence="2">Optimum pH is 9.2 and 10.8 for amination and deamination, respectively.</text>
    </phDependence>
    <temperatureDependence>
        <text evidence="2">Optimum temperature is 52 degrees Celsius for amination (Ref.2). Exhibits prominent thermal stability, specifically a half-life of 23 days at 30 degrees Celsius and pH 8.5 (Ref.2).</text>
    </temperatureDependence>
</comment>
<comment type="biotechnology">
    <text evidence="2">Shows high catalytic efficiency and thermostability, and is a promising biocatalyst for the industrial production of bulky aromatic primary amines.</text>
</comment>
<comment type="similarity">
    <text evidence="4">Belongs to the Glu/Leu/Phe/Val dehydrogenases family.</text>
</comment>
<organism>
    <name type="scientific">Bacillus thermotolerans</name>
    <name type="common">Quasibacillus thermotolerans</name>
    <dbReference type="NCBI Taxonomy" id="1221996"/>
    <lineage>
        <taxon>Bacteria</taxon>
        <taxon>Bacillati</taxon>
        <taxon>Bacillota</taxon>
        <taxon>Bacilli</taxon>
        <taxon>Bacillales</taxon>
        <taxon>Bacillaceae</taxon>
        <taxon>Bacillus</taxon>
    </lineage>
</organism>
<evidence type="ECO:0000250" key="1">
    <source>
        <dbReference type="UniProtKB" id="Q59771"/>
    </source>
</evidence>
<evidence type="ECO:0000269" key="2">
    <source ref="2"/>
</evidence>
<evidence type="ECO:0000303" key="3">
    <source ref="2"/>
</evidence>
<evidence type="ECO:0000305" key="4"/>
<evidence type="ECO:0000312" key="5">
    <source>
        <dbReference type="EMBL" id="KKB41149.1"/>
    </source>
</evidence>
<protein>
    <recommendedName>
        <fullName evidence="3">Phenylalanine dehydrogenase</fullName>
        <shortName evidence="3">PDH</shortName>
        <shortName evidence="4">PheDH</shortName>
        <ecNumber evidence="2">1.4.1.20</ecNumber>
    </recommendedName>
    <alternativeName>
        <fullName evidence="3">QtPDH</fullName>
    </alternativeName>
</protein>
<dbReference type="EC" id="1.4.1.20" evidence="2"/>
<dbReference type="EMBL" id="JWIR02000024">
    <property type="protein sequence ID" value="KKB41149.1"/>
    <property type="molecule type" value="Genomic_DNA"/>
</dbReference>
<dbReference type="RefSeq" id="WP_039229979.1">
    <property type="nucleotide sequence ID" value="NZ_JWIQ02000020.1"/>
</dbReference>
<dbReference type="SMR" id="A0A0F5HSE8"/>
<dbReference type="STRING" id="1221996.QY95_00856"/>
<dbReference type="OrthoDB" id="9803297at2"/>
<dbReference type="Proteomes" id="UP000031563">
    <property type="component" value="Unassembled WGS sequence"/>
</dbReference>
<dbReference type="GO" id="GO:0000166">
    <property type="term" value="F:nucleotide binding"/>
    <property type="evidence" value="ECO:0007669"/>
    <property type="project" value="UniProtKB-KW"/>
</dbReference>
<dbReference type="GO" id="GO:0016639">
    <property type="term" value="F:oxidoreductase activity, acting on the CH-NH2 group of donors, NAD or NADP as acceptor"/>
    <property type="evidence" value="ECO:0007669"/>
    <property type="project" value="InterPro"/>
</dbReference>
<dbReference type="GO" id="GO:0006520">
    <property type="term" value="P:amino acid metabolic process"/>
    <property type="evidence" value="ECO:0007669"/>
    <property type="project" value="InterPro"/>
</dbReference>
<dbReference type="CDD" id="cd01075">
    <property type="entry name" value="NAD_bind_Leu_Phe_Val_DH"/>
    <property type="match status" value="1"/>
</dbReference>
<dbReference type="FunFam" id="3.40.50.10860:FF:000010">
    <property type="entry name" value="Leucine dehydrogenase"/>
    <property type="match status" value="1"/>
</dbReference>
<dbReference type="Gene3D" id="3.40.50.10860">
    <property type="entry name" value="Leucine Dehydrogenase, chain A, domain 1"/>
    <property type="match status" value="1"/>
</dbReference>
<dbReference type="Gene3D" id="3.40.50.720">
    <property type="entry name" value="NAD(P)-binding Rossmann-like Domain"/>
    <property type="match status" value="1"/>
</dbReference>
<dbReference type="InterPro" id="IPR046346">
    <property type="entry name" value="Aminoacid_DH-like_N_sf"/>
</dbReference>
<dbReference type="InterPro" id="IPR006095">
    <property type="entry name" value="Glu/Leu/Phe/Val/Trp_DH"/>
</dbReference>
<dbReference type="InterPro" id="IPR006096">
    <property type="entry name" value="Glu/Leu/Phe/Val/Trp_DH_C"/>
</dbReference>
<dbReference type="InterPro" id="IPR006097">
    <property type="entry name" value="Glu/Leu/Phe/Val/Trp_DH_dimer"/>
</dbReference>
<dbReference type="InterPro" id="IPR033524">
    <property type="entry name" value="Glu/Leu/Phe/Val_DH_AS"/>
</dbReference>
<dbReference type="InterPro" id="IPR016211">
    <property type="entry name" value="Glu/Phe/Leu/Val/Trp_DH_bac/arc"/>
</dbReference>
<dbReference type="InterPro" id="IPR036291">
    <property type="entry name" value="NAD(P)-bd_dom_sf"/>
</dbReference>
<dbReference type="PANTHER" id="PTHR42722">
    <property type="entry name" value="LEUCINE DEHYDROGENASE"/>
    <property type="match status" value="1"/>
</dbReference>
<dbReference type="PANTHER" id="PTHR42722:SF1">
    <property type="entry name" value="VALINE DEHYDROGENASE"/>
    <property type="match status" value="1"/>
</dbReference>
<dbReference type="Pfam" id="PF00208">
    <property type="entry name" value="ELFV_dehydrog"/>
    <property type="match status" value="1"/>
</dbReference>
<dbReference type="Pfam" id="PF02812">
    <property type="entry name" value="ELFV_dehydrog_N"/>
    <property type="match status" value="1"/>
</dbReference>
<dbReference type="PIRSF" id="PIRSF000188">
    <property type="entry name" value="Phe_leu_dh"/>
    <property type="match status" value="1"/>
</dbReference>
<dbReference type="PRINTS" id="PR00082">
    <property type="entry name" value="GLFDHDRGNASE"/>
</dbReference>
<dbReference type="SMART" id="SM00839">
    <property type="entry name" value="ELFV_dehydrog"/>
    <property type="match status" value="1"/>
</dbReference>
<dbReference type="SUPFAM" id="SSF53223">
    <property type="entry name" value="Aminoacid dehydrogenase-like, N-terminal domain"/>
    <property type="match status" value="1"/>
</dbReference>
<dbReference type="SUPFAM" id="SSF51735">
    <property type="entry name" value="NAD(P)-binding Rossmann-fold domains"/>
    <property type="match status" value="1"/>
</dbReference>
<dbReference type="PROSITE" id="PS00074">
    <property type="entry name" value="GLFV_DEHYDROGENASE"/>
    <property type="match status" value="1"/>
</dbReference>